<evidence type="ECO:0000250" key="1">
    <source>
        <dbReference type="UniProtKB" id="O35116"/>
    </source>
</evidence>
<evidence type="ECO:0000250" key="2">
    <source>
        <dbReference type="UniProtKB" id="Q9UQB3"/>
    </source>
</evidence>
<evidence type="ECO:0000255" key="3"/>
<evidence type="ECO:0000256" key="4">
    <source>
        <dbReference type="SAM" id="MobiDB-lite"/>
    </source>
</evidence>
<evidence type="ECO:0000269" key="5">
    <source>
    </source>
</evidence>
<evidence type="ECO:0000269" key="6">
    <source>
    </source>
</evidence>
<evidence type="ECO:0000269" key="7">
    <source>
    </source>
</evidence>
<evidence type="ECO:0000269" key="8">
    <source>
    </source>
</evidence>
<evidence type="ECO:0000269" key="9">
    <source>
    </source>
</evidence>
<evidence type="ECO:0000269" key="10">
    <source>
    </source>
</evidence>
<evidence type="ECO:0000269" key="11">
    <source>
    </source>
</evidence>
<evidence type="ECO:0000269" key="12">
    <source>
    </source>
</evidence>
<evidence type="ECO:0000269" key="13">
    <source>
    </source>
</evidence>
<evidence type="ECO:0000305" key="14"/>
<evidence type="ECO:0007744" key="15">
    <source>
    </source>
</evidence>
<evidence type="ECO:0007744" key="16">
    <source>
    </source>
</evidence>
<evidence type="ECO:0007744" key="17">
    <source>
    </source>
</evidence>
<evidence type="ECO:0007744" key="18">
    <source>
    </source>
</evidence>
<comment type="function">
    <text evidence="2 7 9 11 12 13">Has a critical role in neuronal development, particularly in the formation and/or maintenance of dendritic spines and synapses (PubMed:17993462, PubMed:25807484). Involved in the regulation of canonical Wnt signaling (By similarity). It probably acts on beta-catenin turnover, facilitating beta-catenin interaction with GSK3B, phosphorylation, ubiquitination and degradation (PubMed:20623542). May be involved in neuronal cell adhesion and tissue morphogenesis and integrity by regulating adhesion molecules. Functions as a transcriptional activator when bound to ZBTB33 (PubMed:15282317).</text>
</comment>
<comment type="subunit">
    <text evidence="1 2 7 9 10 11 13">Binds to E-cadherin at a juxtamembrane site within the cytoplasmic domain. Binds to PSEN1. Interacts with PDZD2 (By similarity). Interacts (via the extreme C-terminus) with FRMPD2 (via the PDZ 2 domain) (By similarity). Interacts with ZBTB33. Interacts with ARHGEF28 (PubMed:17993462). Interacts with CDK5 (By similarity). Interacts with CTNNB1 (By similarity). Interacts with GSK3A and GSK3B (PubMed:19706605, PubMed:20623542). Interacts with DNM2 (By similarity). Interacts with CCDC85B (By similarity).</text>
</comment>
<comment type="subcellular location">
    <subcellularLocation>
        <location evidence="7">Nucleus</location>
    </subcellularLocation>
    <subcellularLocation>
        <location evidence="6">Cell junction</location>
        <location evidence="6">Adherens junction</location>
    </subcellularLocation>
    <subcellularLocation>
        <location evidence="1">Cell projection</location>
        <location evidence="1">Dendrite</location>
    </subcellularLocation>
    <subcellularLocation>
        <location evidence="1">Perikaryon</location>
    </subcellularLocation>
</comment>
<comment type="alternative products">
    <event type="alternative splicing"/>
    <isoform>
        <id>O35927-1</id>
        <name>1</name>
        <name>NPRAPa</name>
        <sequence type="displayed"/>
    </isoform>
    <isoform>
        <id>O35927-2</id>
        <name>2</name>
        <name>NPRAPb</name>
        <sequence type="described" ref="VSP_006747"/>
    </isoform>
</comment>
<comment type="tissue specificity">
    <text evidence="6 7">Expressed in neurons and glial cells. Isoform 2 was found to be the most predominant isoform in various brain regions. Expressed at neuromuscular junctions.</text>
</comment>
<comment type="developmental stage">
    <text>Increasingly expressed by 10 dpc. Expression peaks at postnatal day P7 and stays at lower levels in adulthood. First expressed within proliferating neuronal progenitor cells of the neuroepithelium, becomes down-regulated during neuronal migration, and is later reexpressed in the dendritic compartment of postmitotic neurons. In the developing neocortex, it is strongly expressed in the proliferative ventricular zone and the developing cortical plate, yet is conspicuously less prominent in the intermediate zone, which contains migrating cortical neurons, it forms a honeycomb pattern in the neuroepithelium by labeling the cell periphery in a typical adherens junction pattern. By 18 dpc, its expression shifts primarily to nascent apical dendrites, a pattern that continues through adulthood.</text>
</comment>
<comment type="induction">
    <text evidence="5">By retinoic acid.</text>
</comment>
<comment type="PTM">
    <text evidence="8">O-glycosylated.</text>
</comment>
<comment type="PTM">
    <text evidence="1 10">Phosphorylated by CDK5 (By similarity). Phosphorylated by GSK3B (PubMed:19706605).</text>
</comment>
<comment type="similarity">
    <text evidence="14">Belongs to the beta-catenin family.</text>
</comment>
<name>CTND2_MOUSE</name>
<dbReference type="EMBL" id="U90331">
    <property type="protein sequence ID" value="AAB82409.1"/>
    <property type="molecule type" value="mRNA"/>
</dbReference>
<dbReference type="EMBL" id="BC138260">
    <property type="protein sequence ID" value="AAI38261.1"/>
    <property type="molecule type" value="mRNA"/>
</dbReference>
<dbReference type="EMBL" id="BC138261">
    <property type="protein sequence ID" value="AAI38262.1"/>
    <property type="molecule type" value="mRNA"/>
</dbReference>
<dbReference type="PIR" id="T42209">
    <property type="entry name" value="T42209"/>
</dbReference>
<dbReference type="RefSeq" id="NP_032755.2">
    <property type="nucleotide sequence ID" value="NM_008729.2"/>
</dbReference>
<dbReference type="SMR" id="O35927"/>
<dbReference type="BioGRID" id="201832">
    <property type="interactions" value="25"/>
</dbReference>
<dbReference type="FunCoup" id="O35927">
    <property type="interactions" value="793"/>
</dbReference>
<dbReference type="IntAct" id="O35927">
    <property type="interactions" value="9"/>
</dbReference>
<dbReference type="MINT" id="O35927"/>
<dbReference type="STRING" id="10090.ENSMUSP00000080427"/>
<dbReference type="GlyGen" id="O35927">
    <property type="glycosylation" value="22 sites, 2 N-linked glycans (2 sites), 1 O-linked glycan (20 sites)"/>
</dbReference>
<dbReference type="iPTMnet" id="O35927"/>
<dbReference type="PhosphoSitePlus" id="O35927"/>
<dbReference type="SwissPalm" id="O35927"/>
<dbReference type="PaxDb" id="10090-ENSMUSP00000080427"/>
<dbReference type="ProteomicsDB" id="284144">
    <molecule id="O35927-1"/>
</dbReference>
<dbReference type="ProteomicsDB" id="284145">
    <molecule id="O35927-2"/>
</dbReference>
<dbReference type="DNASU" id="18163"/>
<dbReference type="GeneID" id="18163"/>
<dbReference type="KEGG" id="mmu:18163"/>
<dbReference type="AGR" id="MGI:1195966"/>
<dbReference type="CTD" id="1501"/>
<dbReference type="MGI" id="MGI:1195966">
    <property type="gene designation" value="Ctnnd2"/>
</dbReference>
<dbReference type="eggNOG" id="KOG1048">
    <property type="taxonomic scope" value="Eukaryota"/>
</dbReference>
<dbReference type="InParanoid" id="O35927"/>
<dbReference type="OrthoDB" id="3245100at2759"/>
<dbReference type="PhylomeDB" id="O35927"/>
<dbReference type="BioGRID-ORCS" id="18163">
    <property type="hits" value="4 hits in 77 CRISPR screens"/>
</dbReference>
<dbReference type="CD-CODE" id="CE726F99">
    <property type="entry name" value="Postsynaptic density"/>
</dbReference>
<dbReference type="ChiTaRS" id="Ctnnd2">
    <property type="organism name" value="mouse"/>
</dbReference>
<dbReference type="PRO" id="PR:O35927"/>
<dbReference type="Proteomes" id="UP000000589">
    <property type="component" value="Unplaced"/>
</dbReference>
<dbReference type="RNAct" id="O35927">
    <property type="molecule type" value="protein"/>
</dbReference>
<dbReference type="GO" id="GO:0005912">
    <property type="term" value="C:adherens junction"/>
    <property type="evidence" value="ECO:0007669"/>
    <property type="project" value="UniProtKB-SubCell"/>
</dbReference>
<dbReference type="GO" id="GO:0030425">
    <property type="term" value="C:dendrite"/>
    <property type="evidence" value="ECO:0007669"/>
    <property type="project" value="UniProtKB-SubCell"/>
</dbReference>
<dbReference type="GO" id="GO:0005634">
    <property type="term" value="C:nucleus"/>
    <property type="evidence" value="ECO:0007669"/>
    <property type="project" value="UniProtKB-SubCell"/>
</dbReference>
<dbReference type="GO" id="GO:0043204">
    <property type="term" value="C:perikaryon"/>
    <property type="evidence" value="ECO:0000250"/>
    <property type="project" value="UniProtKB"/>
</dbReference>
<dbReference type="GO" id="GO:0014069">
    <property type="term" value="C:postsynaptic density"/>
    <property type="evidence" value="ECO:0000314"/>
    <property type="project" value="MGI"/>
</dbReference>
<dbReference type="GO" id="GO:0098609">
    <property type="term" value="P:cell-cell adhesion"/>
    <property type="evidence" value="ECO:0007669"/>
    <property type="project" value="InterPro"/>
</dbReference>
<dbReference type="GO" id="GO:0007612">
    <property type="term" value="P:learning"/>
    <property type="evidence" value="ECO:0000315"/>
    <property type="project" value="MGI"/>
</dbReference>
<dbReference type="GO" id="GO:0001763">
    <property type="term" value="P:morphogenesis of a branching structure"/>
    <property type="evidence" value="ECO:0000314"/>
    <property type="project" value="MGI"/>
</dbReference>
<dbReference type="GO" id="GO:0048167">
    <property type="term" value="P:regulation of synaptic plasticity"/>
    <property type="evidence" value="ECO:0000315"/>
    <property type="project" value="MGI"/>
</dbReference>
<dbReference type="FunFam" id="1.25.10.10:FF:000008">
    <property type="entry name" value="plakophilin-4 isoform X1"/>
    <property type="match status" value="1"/>
</dbReference>
<dbReference type="Gene3D" id="1.25.10.10">
    <property type="entry name" value="Leucine-rich Repeat Variant"/>
    <property type="match status" value="1"/>
</dbReference>
<dbReference type="InterPro" id="IPR011989">
    <property type="entry name" value="ARM-like"/>
</dbReference>
<dbReference type="InterPro" id="IPR016024">
    <property type="entry name" value="ARM-type_fold"/>
</dbReference>
<dbReference type="InterPro" id="IPR000225">
    <property type="entry name" value="Armadillo"/>
</dbReference>
<dbReference type="InterPro" id="IPR028435">
    <property type="entry name" value="Plakophilin/d_Catenin"/>
</dbReference>
<dbReference type="PANTHER" id="PTHR10372:SF9">
    <property type="entry name" value="CATENIN DELTA-2"/>
    <property type="match status" value="1"/>
</dbReference>
<dbReference type="PANTHER" id="PTHR10372">
    <property type="entry name" value="PLAKOPHILLIN-RELATED"/>
    <property type="match status" value="1"/>
</dbReference>
<dbReference type="Pfam" id="PF00514">
    <property type="entry name" value="Arm"/>
    <property type="match status" value="4"/>
</dbReference>
<dbReference type="SMART" id="SM00185">
    <property type="entry name" value="ARM"/>
    <property type="match status" value="8"/>
</dbReference>
<dbReference type="SUPFAM" id="SSF48371">
    <property type="entry name" value="ARM repeat"/>
    <property type="match status" value="1"/>
</dbReference>
<dbReference type="PROSITE" id="PS50176">
    <property type="entry name" value="ARM_REPEAT"/>
    <property type="match status" value="3"/>
</dbReference>
<feature type="chain" id="PRO_0000064300" description="Catenin delta-2">
    <location>
        <begin position="1"/>
        <end position="1247"/>
    </location>
</feature>
<feature type="repeat" description="ARM 1">
    <location>
        <begin position="391"/>
        <end position="433"/>
    </location>
</feature>
<feature type="repeat" description="ARM 2">
    <location>
        <begin position="537"/>
        <end position="576"/>
    </location>
</feature>
<feature type="repeat" description="ARM 3">
    <location>
        <begin position="579"/>
        <end position="618"/>
    </location>
</feature>
<feature type="repeat" description="ARM 4">
    <location>
        <begin position="623"/>
        <end position="663"/>
    </location>
</feature>
<feature type="repeat" description="ARM 5">
    <location>
        <begin position="679"/>
        <end position="721"/>
    </location>
</feature>
<feature type="repeat" description="ARM 6">
    <location>
        <begin position="725"/>
        <end position="770"/>
    </location>
</feature>
<feature type="repeat" description="ARM 7">
    <location>
        <begin position="832"/>
        <end position="872"/>
    </location>
</feature>
<feature type="repeat" description="ARM 8">
    <location>
        <begin position="904"/>
        <end position="943"/>
    </location>
</feature>
<feature type="repeat" description="ARM 9">
    <location>
        <begin position="997"/>
        <end position="1040"/>
    </location>
</feature>
<feature type="region of interest" description="Disordered" evidence="4">
    <location>
        <begin position="1"/>
        <end position="50"/>
    </location>
</feature>
<feature type="region of interest" description="Disordered" evidence="4">
    <location>
        <begin position="134"/>
        <end position="238"/>
    </location>
</feature>
<feature type="region of interest" description="Disordered" evidence="4">
    <location>
        <begin position="256"/>
        <end position="309"/>
    </location>
</feature>
<feature type="region of interest" description="Disordered" evidence="4">
    <location>
        <begin position="429"/>
        <end position="480"/>
    </location>
</feature>
<feature type="region of interest" description="Disordered" evidence="4">
    <location>
        <begin position="514"/>
        <end position="533"/>
    </location>
</feature>
<feature type="region of interest" description="Disordered" evidence="4">
    <location>
        <begin position="1064"/>
        <end position="1131"/>
    </location>
</feature>
<feature type="region of interest" description="Disordered" evidence="4">
    <location>
        <begin position="1152"/>
        <end position="1176"/>
    </location>
</feature>
<feature type="coiled-coil region" evidence="3">
    <location>
        <begin position="49"/>
        <end position="84"/>
    </location>
</feature>
<feature type="compositionally biased region" description="Polar residues" evidence="4">
    <location>
        <begin position="22"/>
        <end position="50"/>
    </location>
</feature>
<feature type="compositionally biased region" description="Low complexity" evidence="4">
    <location>
        <begin position="149"/>
        <end position="160"/>
    </location>
</feature>
<feature type="compositionally biased region" description="Polar residues" evidence="4">
    <location>
        <begin position="172"/>
        <end position="207"/>
    </location>
</feature>
<feature type="compositionally biased region" description="Pro residues" evidence="4">
    <location>
        <begin position="218"/>
        <end position="228"/>
    </location>
</feature>
<feature type="compositionally biased region" description="Polar residues" evidence="4">
    <location>
        <begin position="265"/>
        <end position="276"/>
    </location>
</feature>
<feature type="compositionally biased region" description="Polar residues" evidence="4">
    <location>
        <begin position="296"/>
        <end position="309"/>
    </location>
</feature>
<feature type="compositionally biased region" description="Polar residues" evidence="4">
    <location>
        <begin position="466"/>
        <end position="475"/>
    </location>
</feature>
<feature type="compositionally biased region" description="Polar residues" evidence="4">
    <location>
        <begin position="1072"/>
        <end position="1081"/>
    </location>
</feature>
<feature type="compositionally biased region" description="Low complexity" evidence="4">
    <location>
        <begin position="1087"/>
        <end position="1100"/>
    </location>
</feature>
<feature type="compositionally biased region" description="Basic and acidic residues" evidence="4">
    <location>
        <begin position="1103"/>
        <end position="1112"/>
    </location>
</feature>
<feature type="modified residue" description="Phosphoserine" evidence="17">
    <location>
        <position position="7"/>
    </location>
</feature>
<feature type="modified residue" description="Omega-N-methylarginine" evidence="18">
    <location>
        <position position="209"/>
    </location>
</feature>
<feature type="modified residue" description="Omega-N-methylarginine" evidence="18">
    <location>
        <position position="261"/>
    </location>
</feature>
<feature type="modified residue" description="Phosphoserine" evidence="17">
    <location>
        <position position="264"/>
    </location>
</feature>
<feature type="modified residue" description="Phosphoserine" evidence="17">
    <location>
        <position position="273"/>
    </location>
</feature>
<feature type="modified residue" description="Omega-N-methylarginine" evidence="18">
    <location>
        <position position="279"/>
    </location>
</feature>
<feature type="modified residue" description="Omega-N-methylarginine" evidence="18">
    <location>
        <position position="293"/>
    </location>
</feature>
<feature type="modified residue" description="Phosphoserine" evidence="17">
    <location>
        <position position="324"/>
    </location>
</feature>
<feature type="modified residue" description="Phosphoserine" evidence="17">
    <location>
        <position position="357"/>
    </location>
</feature>
<feature type="modified residue" description="Phosphoserine" evidence="17">
    <location>
        <position position="412"/>
    </location>
</feature>
<feature type="modified residue" description="Phosphoserine" evidence="17">
    <location>
        <position position="458"/>
    </location>
</feature>
<feature type="modified residue" description="Phosphoserine" evidence="17">
    <location>
        <position position="511"/>
    </location>
</feature>
<feature type="modified residue" description="Phosphotyrosine" evidence="16">
    <location>
        <position position="513"/>
    </location>
</feature>
<feature type="modified residue" description="Phosphoserine" evidence="17">
    <location>
        <position position="1087"/>
    </location>
</feature>
<feature type="modified residue" description="Phosphoserine" evidence="15">
    <location>
        <position position="1098"/>
    </location>
</feature>
<feature type="splice variant" id="VSP_006747" description="In isoform 2." evidence="14">
    <location>
        <begin position="878"/>
        <end position="902"/>
    </location>
</feature>
<organism>
    <name type="scientific">Mus musculus</name>
    <name type="common">Mouse</name>
    <dbReference type="NCBI Taxonomy" id="10090"/>
    <lineage>
        <taxon>Eukaryota</taxon>
        <taxon>Metazoa</taxon>
        <taxon>Chordata</taxon>
        <taxon>Craniata</taxon>
        <taxon>Vertebrata</taxon>
        <taxon>Euteleostomi</taxon>
        <taxon>Mammalia</taxon>
        <taxon>Eutheria</taxon>
        <taxon>Euarchontoglires</taxon>
        <taxon>Glires</taxon>
        <taxon>Rodentia</taxon>
        <taxon>Myomorpha</taxon>
        <taxon>Muroidea</taxon>
        <taxon>Muridae</taxon>
        <taxon>Murinae</taxon>
        <taxon>Mus</taxon>
        <taxon>Mus</taxon>
    </lineage>
</organism>
<proteinExistence type="evidence at protein level"/>
<keyword id="KW-0025">Alternative splicing</keyword>
<keyword id="KW-0130">Cell adhesion</keyword>
<keyword id="KW-0965">Cell junction</keyword>
<keyword id="KW-0966">Cell projection</keyword>
<keyword id="KW-0175">Coiled coil</keyword>
<keyword id="KW-0217">Developmental protein</keyword>
<keyword id="KW-0325">Glycoprotein</keyword>
<keyword id="KW-0488">Methylation</keyword>
<keyword id="KW-0539">Nucleus</keyword>
<keyword id="KW-0597">Phosphoprotein</keyword>
<keyword id="KW-1185">Reference proteome</keyword>
<keyword id="KW-0677">Repeat</keyword>
<keyword id="KW-0804">Transcription</keyword>
<keyword id="KW-0805">Transcription regulation</keyword>
<protein>
    <recommendedName>
        <fullName>Catenin delta-2</fullName>
    </recommendedName>
    <alternativeName>
        <fullName>Neural plakophilin-related ARM-repeat protein</fullName>
        <shortName>NPRAP</shortName>
    </alternativeName>
    <alternativeName>
        <fullName>Neurojungin</fullName>
    </alternativeName>
</protein>
<accession>O35927</accession>
<accession>B2RR80</accession>
<reference key="1">
    <citation type="journal article" date="1997" name="Differentiation">
        <title>Identification and localization of a neurally expressed member of the plakoglobin/armadillo multigene family.</title>
        <authorList>
            <person name="Paffenholz R."/>
            <person name="Franke W.W."/>
        </authorList>
    </citation>
    <scope>NUCLEOTIDE SEQUENCE [MRNA] (ISOFORM 1)</scope>
    <scope>ALTERNATIVE SPLICING</scope>
    <source>
        <tissue>Fetal brain</tissue>
    </source>
</reference>
<reference key="2">
    <citation type="journal article" date="2004" name="Genome Res.">
        <title>The status, quality, and expansion of the NIH full-length cDNA project: the Mammalian Gene Collection (MGC).</title>
        <authorList>
            <consortium name="The MGC Project Team"/>
        </authorList>
    </citation>
    <scope>NUCLEOTIDE SEQUENCE [LARGE SCALE MRNA] (ISOFORM 1)</scope>
    <source>
        <tissue>Brain</tissue>
    </source>
</reference>
<reference key="3">
    <citation type="journal article" date="1999" name="J. Cell Biol.">
        <title>Delta-catenin, an adhesive junction-associated protein which promotes cell scattering.</title>
        <authorList>
            <person name="Lu Q."/>
            <person name="Paredes M."/>
            <person name="Medina M."/>
            <person name="Zhou J."/>
            <person name="Cavallo R."/>
            <person name="Peifer M."/>
            <person name="Orecchio L."/>
            <person name="Kosik K.S."/>
        </authorList>
    </citation>
    <scope>FUNCTION</scope>
    <scope>INTERACTION WITH E-CADHERIN</scope>
    <source>
        <tissue>Brain</tissue>
    </source>
</reference>
<reference key="4">
    <citation type="journal article" date="1999" name="Neurosci. Lett.">
        <title>Expression of the mRNA for two isoforms of neural plakophilin-related arm-repeat protein/delta-catenin in rodent neurons and glial cells.</title>
        <authorList>
            <person name="Kawamura Y."/>
            <person name="Fan Q.W."/>
            <person name="Hayashi H."/>
            <person name="Michikawa M."/>
            <person name="Yanagisawa K."/>
            <person name="Komano H."/>
        </authorList>
    </citation>
    <scope>ALTERNATIVE SPLICING (ISOFORMS 1 AND 2)</scope>
    <scope>INDUCTION</scope>
</reference>
<reference key="5">
    <citation type="journal article" date="2000" name="J. Comp. Neurol.">
        <title>Delta-catenin is a nervous system-specific adherens junction protein which undergoes dynamic relocalization during development.</title>
        <authorList>
            <person name="Ho C."/>
            <person name="Zhou J."/>
            <person name="Medina M."/>
            <person name="Goto T."/>
            <person name="Jacobson M."/>
            <person name="Bhide P.G."/>
            <person name="Kosik K.S."/>
        </authorList>
    </citation>
    <scope>TISSUE SPECIFICITY</scope>
    <scope>SUBCELLULAR LOCATION</scope>
</reference>
<reference key="6">
    <citation type="journal article" date="2004" name="Mol. Cell. Biol.">
        <title>Regulation of the rapsyn promoter by kaiso and delta-catenin.</title>
        <authorList>
            <person name="Rodova M."/>
            <person name="Kelly K.F."/>
            <person name="VanSaun M."/>
            <person name="Daniel J.M."/>
            <person name="Werle M.J."/>
        </authorList>
    </citation>
    <scope>FUNCTION</scope>
    <scope>INTERACTION WITH ZBTB33</scope>
    <scope>SUBCELLULAR LOCATION</scope>
    <scope>TISSUE SPECIFICITY</scope>
</reference>
<reference key="7">
    <citation type="journal article" date="2004" name="Mol. Cell. Proteomics">
        <title>Phosphoproteomic analysis of the developing mouse brain.</title>
        <authorList>
            <person name="Ballif B.A."/>
            <person name="Villen J."/>
            <person name="Beausoleil S.A."/>
            <person name="Schwartz D."/>
            <person name="Gygi S.P."/>
        </authorList>
    </citation>
    <scope>IDENTIFICATION BY MASS SPECTROMETRY [LARGE SCALE ANALYSIS]</scope>
    <source>
        <tissue>Embryonic brain</tissue>
    </source>
</reference>
<reference key="8">
    <citation type="journal article" date="2006" name="Mol. Cell. Proteomics">
        <title>Comprehensive identification of phosphorylation sites in postsynaptic density preparations.</title>
        <authorList>
            <person name="Trinidad J.C."/>
            <person name="Specht C.G."/>
            <person name="Thalhammer A."/>
            <person name="Schoepfer R."/>
            <person name="Burlingame A.L."/>
        </authorList>
    </citation>
    <scope>PHOSPHORYLATION [LARGE SCALE ANALYSIS] AT SER-1098</scope>
    <scope>IDENTIFICATION BY MASS SPECTROMETRY [LARGE SCALE ANALYSIS]</scope>
    <source>
        <tissue>Brain</tissue>
    </source>
</reference>
<reference key="9">
    <citation type="journal article" date="2006" name="Mol. Cell. Proteomics">
        <title>O-linked N-acetylglucosamine proteomics of postsynaptic density preparations using lectin weak affinity chromatography and mass spectrometry.</title>
        <authorList>
            <person name="Vosseller K."/>
            <person name="Trinidad J.C."/>
            <person name="Chalkley R.J."/>
            <person name="Specht C.G."/>
            <person name="Thalhammer A."/>
            <person name="Lynn A.J."/>
            <person name="Snedecor J.O."/>
            <person name="Guan S."/>
            <person name="Medzihradszky K.F."/>
            <person name="Maltby D.A."/>
            <person name="Schoepfer R."/>
            <person name="Burlingame A.L."/>
        </authorList>
    </citation>
    <scope>GLYCOSYLATION [LARGE SCALE ANALYSIS]</scope>
    <source>
        <tissue>Brain</tissue>
    </source>
</reference>
<reference key="10">
    <citation type="journal article" date="2008" name="J. Biol. Chem.">
        <title>Delta-catenin-induced dendritic morphogenesis. An essential role of p190RhoGEF interaction through Akt1-mediated phosphorylation.</title>
        <authorList>
            <person name="Kim H."/>
            <person name="Han J.-R."/>
            <person name="Park J."/>
            <person name="Oh M."/>
            <person name="James S.E."/>
            <person name="Chang S."/>
            <person name="Lu Q."/>
            <person name="Lee K.Y."/>
            <person name="Ki H."/>
            <person name="Song W.-J."/>
            <person name="Kim K."/>
        </authorList>
    </citation>
    <scope>FUNCTION</scope>
    <scope>INTERACTION WITH ARHGEF28</scope>
</reference>
<reference key="11">
    <citation type="journal article" date="2008" name="J. Proteome Res.">
        <title>Large-scale identification and evolution indexing of tyrosine phosphorylation sites from murine brain.</title>
        <authorList>
            <person name="Ballif B.A."/>
            <person name="Carey G.R."/>
            <person name="Sunyaev S.R."/>
            <person name="Gygi S.P."/>
        </authorList>
    </citation>
    <scope>PHOSPHORYLATION [LARGE SCALE ANALYSIS] AT TYR-513</scope>
    <scope>IDENTIFICATION BY MASS SPECTROMETRY [LARGE SCALE ANALYSIS]</scope>
    <source>
        <tissue>Brain</tissue>
    </source>
</reference>
<reference key="12">
    <citation type="journal article" date="2009" name="J. Biol. Chem.">
        <title>GSK-3 phosphorylates delta-catenin and negatively regulates its stability via ubiquitination/proteosome-mediated proteolysis.</title>
        <authorList>
            <person name="Oh M."/>
            <person name="Kim H."/>
            <person name="Yang I."/>
            <person name="Park J.H."/>
            <person name="Cong W.T."/>
            <person name="Baek M.C."/>
            <person name="Bareiss S."/>
            <person name="Ki H."/>
            <person name="Lu Q."/>
            <person name="No J."/>
            <person name="Kwon I."/>
            <person name="Choi J.K."/>
            <person name="Kim K."/>
        </authorList>
    </citation>
    <scope>INTERACTION WITH GSK3A AND GSK3B</scope>
    <scope>PHOSPHORYLATION BY GSK3B</scope>
</reference>
<reference key="13">
    <citation type="journal article" date="2010" name="Cell">
        <title>A tissue-specific atlas of mouse protein phosphorylation and expression.</title>
        <authorList>
            <person name="Huttlin E.L."/>
            <person name="Jedrychowski M.P."/>
            <person name="Elias J.E."/>
            <person name="Goswami T."/>
            <person name="Rad R."/>
            <person name="Beausoleil S.A."/>
            <person name="Villen J."/>
            <person name="Haas W."/>
            <person name="Sowa M.E."/>
            <person name="Gygi S.P."/>
        </authorList>
    </citation>
    <scope>PHOSPHORYLATION [LARGE SCALE ANALYSIS] AT SER-7; SER-264; SER-273; SER-324; SER-357; SER-412; SER-458; SER-511 AND SER-1087</scope>
    <scope>IDENTIFICATION BY MASS SPECTROMETRY [LARGE SCALE ANALYSIS]</scope>
    <source>
        <tissue>Brain</tissue>
        <tissue>Lung</tissue>
    </source>
</reference>
<reference key="14">
    <citation type="journal article" date="2010" name="J. Neurosci. Res.">
        <title>Delta-catenin/NPRAP: A new member of the glycogen synthase kinase-3beta signaling complex that promotes beta-catenin turnover in neurons.</title>
        <authorList>
            <person name="Bareiss S."/>
            <person name="Kim K."/>
            <person name="Lu Q."/>
        </authorList>
    </citation>
    <scope>FUNCTION</scope>
    <scope>INTERACTION WITH GSK3B</scope>
</reference>
<reference key="15">
    <citation type="journal article" date="2014" name="Mol. Cell. Proteomics">
        <title>Immunoaffinity enrichment and mass spectrometry analysis of protein methylation.</title>
        <authorList>
            <person name="Guo A."/>
            <person name="Gu H."/>
            <person name="Zhou J."/>
            <person name="Mulhern D."/>
            <person name="Wang Y."/>
            <person name="Lee K.A."/>
            <person name="Yang V."/>
            <person name="Aguiar M."/>
            <person name="Kornhauser J."/>
            <person name="Jia X."/>
            <person name="Ren J."/>
            <person name="Beausoleil S.A."/>
            <person name="Silva J.C."/>
            <person name="Vemulapalli V."/>
            <person name="Bedford M.T."/>
            <person name="Comb M.J."/>
        </authorList>
    </citation>
    <scope>METHYLATION [LARGE SCALE ANALYSIS] AT ARG-209; ARG-261; ARG-279 AND ARG-293</scope>
    <scope>IDENTIFICATION BY MASS SPECTROMETRY [LARGE SCALE ANALYSIS]</scope>
    <source>
        <tissue>Brain</tissue>
    </source>
</reference>
<reference key="16">
    <citation type="journal article" date="2015" name="Nature">
        <title>Loss of delta-catenin function in severe autism.</title>
        <authorList>
            <person name="Turner T.N."/>
            <person name="Sharma K."/>
            <person name="Oh E.C."/>
            <person name="Liu Y.P."/>
            <person name="Collins R.L."/>
            <person name="Sosa M.X."/>
            <person name="Auer D.R."/>
            <person name="Brand H."/>
            <person name="Sanders S.J."/>
            <person name="Moreno-De-Luca D."/>
            <person name="Pihur V."/>
            <person name="Plona T."/>
            <person name="Pike K."/>
            <person name="Soppet D.R."/>
            <person name="Smith M.W."/>
            <person name="Cheung S.W."/>
            <person name="Martin C.L."/>
            <person name="State M.W."/>
            <person name="Talkowski M.E."/>
            <person name="Cook E."/>
            <person name="Huganir R."/>
            <person name="Katsanis N."/>
            <person name="Chakravarti A."/>
        </authorList>
    </citation>
    <scope>FUNCTION</scope>
</reference>
<sequence>MFARKQSGAAPFGAMPVPDQPPSASEKNSSLSPGLNTSNGDGSETETTSAILASVKEQELQFERLTRELEAERQIVASQLERCKLGSETGSMSSISSAGEQFHWQTQDGQKDIEDELTTGLELVDSCIRSLQESGILDPQDYSTSERPSLLSQSALQLNSKPEGSFQYPASYHSNQTLALGDTAPSQLPARSTQARAAGQSFSQGTTGRAGHLAGSEPAPPPPPPREPFAPSLGSAFHLPDAPPAAAALYYSSSTLPAPPRGGSPLTTTQGGSPTKLQRGGSAPEGAAYAAPRGSSPKQSPSRLAKSYSTSSPINIVVSSAGLSPIRVTSPPTVQSTISSSPIHQLSSTIGTYATLSPTKRLVHASEQYSKHSQELYATATLQRPGSLAAGSRASYSSQHGHLAPELRALQSPEHHIDPIYEDRVYQKPPMRSLSQSQGDPLPPAHTGTFRTSTAPSSPGVDSVPLQRTGSQHGPQNAAAATFQRASYAAGPASNYADPYRQLQYCASVDSPYSKSGPALPPEGTLARSPSIDSIQKDPREFGWRDPELPEVIQMLQHQFPSVQSNAAAYLQHLCFGDNKIKAEIRRQGGIQLLVDLLDHRMTEVHRSACGALRNLVYGKANDDNKIALKNCGGIPALVRLLRKTTDLEIRELVTGVLWNLSSCDALKMPIIQDALAVLTNAVIIPHSGWENSPLQDDRKIQLHSSQVLRNATGCLRNVSSAGEEARRRMRECDGLTDALLYVIQSALGSSEIDSKTVENCVCILRNLSYRLAAETSQGQHMGTDELDGLLCGETNGKDTESSGCWGKKKKKKKSQDQWDGVGPLPDCAEPPKGIQMLWHPSIVKPYLTLLSECSNPDTLEGAAGALQNLAAGSWKGWAEDVAGMAYALRSLPEGAPCLPQWSVYIRAAVRKEKGLPILVELLRIDNDRVVCAVATALRNMALDVRNKELIGKYAMRDLVHRLPGGNNSNNSGSKAMSDDTVTAVCCTLHEVITKNMENAKALRDAGGIEKLVGISKSKGDKHSPKVVKAASQVLNSMWQYRDLRSLYKKDGWSQYHFVASSSTIERDRQRPYSSSRTPSISPVRVSPNNRSASAPASPREMISLKERKTDYESAGNNATYHGTKGEHTSRKDTMTAQNTGVSTLYRNSYGAPAEDIKQNQVSTQPVPQEPSRKDYETYQPFPNSTRNYDESFFEDQVHHRPPASEYTMHLGLKSTGNYVDFYSAARPYSELNYETSHYPASPDSWV</sequence>
<gene>
    <name type="primary">Ctnnd2</name>
    <name type="synonym">Catnd2</name>
    <name type="synonym">Nprap</name>
</gene>